<name>RECR_GLOVI</name>
<evidence type="ECO:0000255" key="1">
    <source>
        <dbReference type="HAMAP-Rule" id="MF_00017"/>
    </source>
</evidence>
<organism>
    <name type="scientific">Gloeobacter violaceus (strain ATCC 29082 / PCC 7421)</name>
    <dbReference type="NCBI Taxonomy" id="251221"/>
    <lineage>
        <taxon>Bacteria</taxon>
        <taxon>Bacillati</taxon>
        <taxon>Cyanobacteriota</taxon>
        <taxon>Cyanophyceae</taxon>
        <taxon>Gloeobacterales</taxon>
        <taxon>Gloeobacteraceae</taxon>
        <taxon>Gloeobacter</taxon>
    </lineage>
</organism>
<sequence>MYTRPLARLIEHLQRLPGIGPKTAQRLAFHLLRRPKSEALQLAQALVEATEQIGVCSRCFNLSAEDPCDICRQPGRQGETICVVAEPRDLVAIERTREFKGHYHVLGGLINPMEGIGPEQLRIKELLQRVGADTVKEVILAINPSTEGEMTTMYLSKYVKVLGPRVTRIAFGLPVGGDLEYADEMTLARALEGRREI</sequence>
<comment type="function">
    <text evidence="1">May play a role in DNA repair. It seems to be involved in an RecBC-independent recombinational process of DNA repair. It may act with RecF and RecO.</text>
</comment>
<comment type="similarity">
    <text evidence="1">Belongs to the RecR family.</text>
</comment>
<proteinExistence type="inferred from homology"/>
<gene>
    <name evidence="1" type="primary">recR</name>
    <name type="ordered locus">glr3499</name>
</gene>
<keyword id="KW-0227">DNA damage</keyword>
<keyword id="KW-0233">DNA recombination</keyword>
<keyword id="KW-0234">DNA repair</keyword>
<keyword id="KW-0479">Metal-binding</keyword>
<keyword id="KW-1185">Reference proteome</keyword>
<keyword id="KW-0862">Zinc</keyword>
<keyword id="KW-0863">Zinc-finger</keyword>
<accession>Q7NFM5</accession>
<protein>
    <recommendedName>
        <fullName evidence="1">Recombination protein RecR</fullName>
    </recommendedName>
</protein>
<dbReference type="EMBL" id="BA000045">
    <property type="protein sequence ID" value="BAC91440.1"/>
    <property type="molecule type" value="Genomic_DNA"/>
</dbReference>
<dbReference type="RefSeq" id="NP_926445.1">
    <property type="nucleotide sequence ID" value="NC_005125.1"/>
</dbReference>
<dbReference type="RefSeq" id="WP_011143488.1">
    <property type="nucleotide sequence ID" value="NC_005125.1"/>
</dbReference>
<dbReference type="SMR" id="Q7NFM5"/>
<dbReference type="FunCoup" id="Q7NFM5">
    <property type="interactions" value="38"/>
</dbReference>
<dbReference type="STRING" id="251221.gene:10761011"/>
<dbReference type="EnsemblBacteria" id="BAC91440">
    <property type="protein sequence ID" value="BAC91440"/>
    <property type="gene ID" value="BAC91440"/>
</dbReference>
<dbReference type="KEGG" id="gvi:glr3499"/>
<dbReference type="PATRIC" id="fig|251221.4.peg.3533"/>
<dbReference type="eggNOG" id="COG0353">
    <property type="taxonomic scope" value="Bacteria"/>
</dbReference>
<dbReference type="HOGENOM" id="CLU_060739_1_0_3"/>
<dbReference type="InParanoid" id="Q7NFM5"/>
<dbReference type="OrthoDB" id="9802672at2"/>
<dbReference type="PhylomeDB" id="Q7NFM5"/>
<dbReference type="Proteomes" id="UP000000557">
    <property type="component" value="Chromosome"/>
</dbReference>
<dbReference type="GO" id="GO:0003677">
    <property type="term" value="F:DNA binding"/>
    <property type="evidence" value="ECO:0007669"/>
    <property type="project" value="UniProtKB-UniRule"/>
</dbReference>
<dbReference type="GO" id="GO:0008270">
    <property type="term" value="F:zinc ion binding"/>
    <property type="evidence" value="ECO:0007669"/>
    <property type="project" value="UniProtKB-KW"/>
</dbReference>
<dbReference type="GO" id="GO:0006302">
    <property type="term" value="P:double-strand break repair"/>
    <property type="evidence" value="ECO:0000318"/>
    <property type="project" value="GO_Central"/>
</dbReference>
<dbReference type="GO" id="GO:0000725">
    <property type="term" value="P:recombinational repair"/>
    <property type="evidence" value="ECO:0000318"/>
    <property type="project" value="GO_Central"/>
</dbReference>
<dbReference type="CDD" id="cd01025">
    <property type="entry name" value="TOPRIM_recR"/>
    <property type="match status" value="1"/>
</dbReference>
<dbReference type="Gene3D" id="3.30.60.80">
    <property type="match status" value="1"/>
</dbReference>
<dbReference type="Gene3D" id="3.40.1360.10">
    <property type="match status" value="1"/>
</dbReference>
<dbReference type="Gene3D" id="6.10.250.240">
    <property type="match status" value="1"/>
</dbReference>
<dbReference type="Gene3D" id="1.10.8.420">
    <property type="entry name" value="RecR Domain 1"/>
    <property type="match status" value="1"/>
</dbReference>
<dbReference type="HAMAP" id="MF_00017">
    <property type="entry name" value="RecR"/>
    <property type="match status" value="1"/>
</dbReference>
<dbReference type="InterPro" id="IPR000093">
    <property type="entry name" value="DNA_Rcmb_RecR"/>
</dbReference>
<dbReference type="InterPro" id="IPR023627">
    <property type="entry name" value="Rcmb_RecR"/>
</dbReference>
<dbReference type="InterPro" id="IPR015967">
    <property type="entry name" value="Rcmb_RecR_Znf"/>
</dbReference>
<dbReference type="InterPro" id="IPR006171">
    <property type="entry name" value="TOPRIM_dom"/>
</dbReference>
<dbReference type="InterPro" id="IPR034137">
    <property type="entry name" value="TOPRIM_RecR"/>
</dbReference>
<dbReference type="NCBIfam" id="TIGR00615">
    <property type="entry name" value="recR"/>
    <property type="match status" value="1"/>
</dbReference>
<dbReference type="PANTHER" id="PTHR30446">
    <property type="entry name" value="RECOMBINATION PROTEIN RECR"/>
    <property type="match status" value="1"/>
</dbReference>
<dbReference type="PANTHER" id="PTHR30446:SF0">
    <property type="entry name" value="RECOMBINATION PROTEIN RECR"/>
    <property type="match status" value="1"/>
</dbReference>
<dbReference type="Pfam" id="PF21175">
    <property type="entry name" value="RecR_C"/>
    <property type="match status" value="1"/>
</dbReference>
<dbReference type="Pfam" id="PF21176">
    <property type="entry name" value="RecR_HhH"/>
    <property type="match status" value="1"/>
</dbReference>
<dbReference type="Pfam" id="PF02132">
    <property type="entry name" value="RecR_ZnF"/>
    <property type="match status" value="1"/>
</dbReference>
<dbReference type="Pfam" id="PF13662">
    <property type="entry name" value="Toprim_4"/>
    <property type="match status" value="1"/>
</dbReference>
<dbReference type="SMART" id="SM00493">
    <property type="entry name" value="TOPRIM"/>
    <property type="match status" value="1"/>
</dbReference>
<dbReference type="SUPFAM" id="SSF111304">
    <property type="entry name" value="Recombination protein RecR"/>
    <property type="match status" value="1"/>
</dbReference>
<dbReference type="PROSITE" id="PS01300">
    <property type="entry name" value="RECR"/>
    <property type="match status" value="1"/>
</dbReference>
<dbReference type="PROSITE" id="PS50880">
    <property type="entry name" value="TOPRIM"/>
    <property type="match status" value="1"/>
</dbReference>
<reference key="1">
    <citation type="journal article" date="2003" name="DNA Res.">
        <title>Complete genome structure of Gloeobacter violaceus PCC 7421, a cyanobacterium that lacks thylakoids.</title>
        <authorList>
            <person name="Nakamura Y."/>
            <person name="Kaneko T."/>
            <person name="Sato S."/>
            <person name="Mimuro M."/>
            <person name="Miyashita H."/>
            <person name="Tsuchiya T."/>
            <person name="Sasamoto S."/>
            <person name="Watanabe A."/>
            <person name="Kawashima K."/>
            <person name="Kishida Y."/>
            <person name="Kiyokawa C."/>
            <person name="Kohara M."/>
            <person name="Matsumoto M."/>
            <person name="Matsuno A."/>
            <person name="Nakazaki N."/>
            <person name="Shimpo S."/>
            <person name="Takeuchi C."/>
            <person name="Yamada M."/>
            <person name="Tabata S."/>
        </authorList>
    </citation>
    <scope>NUCLEOTIDE SEQUENCE [LARGE SCALE GENOMIC DNA]</scope>
    <source>
        <strain>ATCC 29082 / PCC 7421</strain>
    </source>
</reference>
<feature type="chain" id="PRO_0000190325" description="Recombination protein RecR">
    <location>
        <begin position="1"/>
        <end position="197"/>
    </location>
</feature>
<feature type="domain" description="Toprim" evidence="1">
    <location>
        <begin position="79"/>
        <end position="174"/>
    </location>
</feature>
<feature type="zinc finger region" description="C4-type" evidence="1">
    <location>
        <begin position="56"/>
        <end position="71"/>
    </location>
</feature>